<keyword id="KW-0067">ATP-binding</keyword>
<keyword id="KW-0963">Cytoplasm</keyword>
<keyword id="KW-0227">DNA damage</keyword>
<keyword id="KW-0233">DNA recombination</keyword>
<keyword id="KW-0234">DNA repair</keyword>
<keyword id="KW-0238">DNA-binding</keyword>
<keyword id="KW-0378">Hydrolase</keyword>
<keyword id="KW-0547">Nucleotide-binding</keyword>
<keyword id="KW-1185">Reference proteome</keyword>
<comment type="function">
    <text evidence="1">The RuvA-RuvB-RuvC complex processes Holliday junction (HJ) DNA during genetic recombination and DNA repair, while the RuvA-RuvB complex plays an important role in the rescue of blocked DNA replication forks via replication fork reversal (RFR). RuvA specifically binds to HJ cruciform DNA, conferring on it an open structure. The RuvB hexamer acts as an ATP-dependent pump, pulling dsDNA into and through the RuvAB complex. RuvB forms 2 homohexamers on either side of HJ DNA bound by 1 or 2 RuvA tetramers; 4 subunits per hexamer contact DNA at a time. Coordinated motions by a converter formed by DNA-disengaged RuvB subunits stimulates ATP hydrolysis and nucleotide exchange. Immobilization of the converter enables RuvB to convert the ATP-contained energy into a lever motion, pulling 2 nucleotides of DNA out of the RuvA tetramer per ATP hydrolyzed, thus driving DNA branch migration. The RuvB motors rotate together with the DNA substrate, which together with the progressing nucleotide cycle form the mechanistic basis for DNA recombination by continuous HJ branch migration. Branch migration allows RuvC to scan DNA until it finds its consensus sequence, where it cleaves and resolves cruciform DNA.</text>
</comment>
<comment type="catalytic activity">
    <reaction evidence="1">
        <text>ATP + H2O = ADP + phosphate + H(+)</text>
        <dbReference type="Rhea" id="RHEA:13065"/>
        <dbReference type="ChEBI" id="CHEBI:15377"/>
        <dbReference type="ChEBI" id="CHEBI:15378"/>
        <dbReference type="ChEBI" id="CHEBI:30616"/>
        <dbReference type="ChEBI" id="CHEBI:43474"/>
        <dbReference type="ChEBI" id="CHEBI:456216"/>
    </reaction>
</comment>
<comment type="subunit">
    <text evidence="1">Homohexamer. Forms an RuvA(8)-RuvB(12)-Holliday junction (HJ) complex. HJ DNA is sandwiched between 2 RuvA tetramers; dsDNA enters through RuvA and exits via RuvB. An RuvB hexamer assembles on each DNA strand where it exits the tetramer. Each RuvB hexamer is contacted by two RuvA subunits (via domain III) on 2 adjacent RuvB subunits; this complex drives branch migration. In the full resolvosome a probable DNA-RuvA(4)-RuvB(12)-RuvC(2) complex forms which resolves the HJ.</text>
</comment>
<comment type="subcellular location">
    <subcellularLocation>
        <location evidence="1">Cytoplasm</location>
    </subcellularLocation>
</comment>
<comment type="domain">
    <text evidence="1">Has 3 domains, the large (RuvB-L) and small ATPase (RuvB-S) domains and the C-terminal head (RuvB-H) domain. The head domain binds DNA, while the ATPase domains jointly bind ATP, ADP or are empty depending on the state of the subunit in the translocation cycle. During a single DNA translocation step the structure of each domain remains the same, but their relative positions change.</text>
</comment>
<comment type="similarity">
    <text evidence="1">Belongs to the RuvB family.</text>
</comment>
<feature type="chain" id="PRO_1000089647" description="Holliday junction branch migration complex subunit RuvB">
    <location>
        <begin position="1"/>
        <end position="337"/>
    </location>
</feature>
<feature type="region of interest" description="Large ATPase domain (RuvB-L)" evidence="1">
    <location>
        <begin position="1"/>
        <end position="180"/>
    </location>
</feature>
<feature type="region of interest" description="Small ATPAse domain (RuvB-S)" evidence="1">
    <location>
        <begin position="181"/>
        <end position="251"/>
    </location>
</feature>
<feature type="region of interest" description="Head domain (RuvB-H)" evidence="1">
    <location>
        <begin position="254"/>
        <end position="337"/>
    </location>
</feature>
<feature type="binding site" evidence="1">
    <location>
        <position position="19"/>
    </location>
    <ligand>
        <name>ATP</name>
        <dbReference type="ChEBI" id="CHEBI:30616"/>
    </ligand>
</feature>
<feature type="binding site" evidence="1">
    <location>
        <position position="20"/>
    </location>
    <ligand>
        <name>ATP</name>
        <dbReference type="ChEBI" id="CHEBI:30616"/>
    </ligand>
</feature>
<feature type="binding site" evidence="1">
    <location>
        <position position="61"/>
    </location>
    <ligand>
        <name>ATP</name>
        <dbReference type="ChEBI" id="CHEBI:30616"/>
    </ligand>
</feature>
<feature type="binding site" evidence="1">
    <location>
        <position position="64"/>
    </location>
    <ligand>
        <name>ATP</name>
        <dbReference type="ChEBI" id="CHEBI:30616"/>
    </ligand>
</feature>
<feature type="binding site" evidence="1">
    <location>
        <position position="65"/>
    </location>
    <ligand>
        <name>ATP</name>
        <dbReference type="ChEBI" id="CHEBI:30616"/>
    </ligand>
</feature>
<feature type="binding site" evidence="1">
    <location>
        <position position="65"/>
    </location>
    <ligand>
        <name>Mg(2+)</name>
        <dbReference type="ChEBI" id="CHEBI:18420"/>
    </ligand>
</feature>
<feature type="binding site" evidence="1">
    <location>
        <position position="66"/>
    </location>
    <ligand>
        <name>ATP</name>
        <dbReference type="ChEBI" id="CHEBI:30616"/>
    </ligand>
</feature>
<feature type="binding site" evidence="1">
    <location>
        <begin position="127"/>
        <end position="129"/>
    </location>
    <ligand>
        <name>ATP</name>
        <dbReference type="ChEBI" id="CHEBI:30616"/>
    </ligand>
</feature>
<feature type="binding site" evidence="1">
    <location>
        <position position="170"/>
    </location>
    <ligand>
        <name>ATP</name>
        <dbReference type="ChEBI" id="CHEBI:30616"/>
    </ligand>
</feature>
<feature type="binding site" evidence="1">
    <location>
        <position position="180"/>
    </location>
    <ligand>
        <name>ATP</name>
        <dbReference type="ChEBI" id="CHEBI:30616"/>
    </ligand>
</feature>
<feature type="binding site" evidence="1">
    <location>
        <position position="217"/>
    </location>
    <ligand>
        <name>ATP</name>
        <dbReference type="ChEBI" id="CHEBI:30616"/>
    </ligand>
</feature>
<feature type="binding site" evidence="1">
    <location>
        <position position="309"/>
    </location>
    <ligand>
        <name>DNA</name>
        <dbReference type="ChEBI" id="CHEBI:16991"/>
    </ligand>
</feature>
<feature type="binding site" evidence="1">
    <location>
        <position position="314"/>
    </location>
    <ligand>
        <name>DNA</name>
        <dbReference type="ChEBI" id="CHEBI:16991"/>
    </ligand>
</feature>
<evidence type="ECO:0000255" key="1">
    <source>
        <dbReference type="HAMAP-Rule" id="MF_00016"/>
    </source>
</evidence>
<accession>B5EAH3</accession>
<gene>
    <name evidence="1" type="primary">ruvB</name>
    <name type="ordered locus">Gbem_3316</name>
</gene>
<sequence length="337" mass="36932">MTRLISADKSEDDLLEASLRPRALSDYVGQEKAKGNLGLFIDAARGRSEALDHVLLYGPPGLGKTTLANIIACEMGVNIKSTSGPVIERPGDLAAILTNLEAHDVLFIDEIHRLSHVVEEILYPAMEDFQLDIIIGQGPSARTIKLDLPKFTLVGATTRAGLLSSPLRDRFGVISRLEFYTHEELAFIITRSARIFGMAIAPEGAMELARRSRGTPRIANRLLRRVRDFAQVRADGVITREVADQALALLEIDDMGFDMMDRAILLTIIDKFGGGPVGLDTIAAAISEESDTIEDVYEPFLIQNGFLNRTPRGRVATAAAYRHFGRIAPEPPQGKLF</sequence>
<reference key="1">
    <citation type="submission" date="2008-07" db="EMBL/GenBank/DDBJ databases">
        <title>Complete sequence of Geobacter bemidjiensis BEM.</title>
        <authorList>
            <consortium name="US DOE Joint Genome Institute"/>
            <person name="Lucas S."/>
            <person name="Copeland A."/>
            <person name="Lapidus A."/>
            <person name="Glavina del Rio T."/>
            <person name="Dalin E."/>
            <person name="Tice H."/>
            <person name="Bruce D."/>
            <person name="Goodwin L."/>
            <person name="Pitluck S."/>
            <person name="Kiss H."/>
            <person name="Brettin T."/>
            <person name="Detter J.C."/>
            <person name="Han C."/>
            <person name="Kuske C.R."/>
            <person name="Schmutz J."/>
            <person name="Larimer F."/>
            <person name="Land M."/>
            <person name="Hauser L."/>
            <person name="Kyrpides N."/>
            <person name="Lykidis A."/>
            <person name="Lovley D."/>
            <person name="Richardson P."/>
        </authorList>
    </citation>
    <scope>NUCLEOTIDE SEQUENCE [LARGE SCALE GENOMIC DNA]</scope>
    <source>
        <strain>ATCC BAA-1014 / DSM 16622 / JCM 12645 / Bem</strain>
    </source>
</reference>
<proteinExistence type="inferred from homology"/>
<organism>
    <name type="scientific">Citrifermentans bemidjiense (strain ATCC BAA-1014 / DSM 16622 / JCM 12645 / Bem)</name>
    <name type="common">Geobacter bemidjiensis</name>
    <dbReference type="NCBI Taxonomy" id="404380"/>
    <lineage>
        <taxon>Bacteria</taxon>
        <taxon>Pseudomonadati</taxon>
        <taxon>Thermodesulfobacteriota</taxon>
        <taxon>Desulfuromonadia</taxon>
        <taxon>Geobacterales</taxon>
        <taxon>Geobacteraceae</taxon>
        <taxon>Citrifermentans</taxon>
    </lineage>
</organism>
<dbReference type="EC" id="3.6.4.-" evidence="1"/>
<dbReference type="EMBL" id="CP001124">
    <property type="protein sequence ID" value="ACH40312.1"/>
    <property type="molecule type" value="Genomic_DNA"/>
</dbReference>
<dbReference type="RefSeq" id="WP_012531745.1">
    <property type="nucleotide sequence ID" value="NC_011146.1"/>
</dbReference>
<dbReference type="SMR" id="B5EAH3"/>
<dbReference type="STRING" id="404380.Gbem_3316"/>
<dbReference type="KEGG" id="gbm:Gbem_3316"/>
<dbReference type="eggNOG" id="COG2255">
    <property type="taxonomic scope" value="Bacteria"/>
</dbReference>
<dbReference type="HOGENOM" id="CLU_055599_1_0_7"/>
<dbReference type="OrthoDB" id="9804478at2"/>
<dbReference type="Proteomes" id="UP000008825">
    <property type="component" value="Chromosome"/>
</dbReference>
<dbReference type="GO" id="GO:0005737">
    <property type="term" value="C:cytoplasm"/>
    <property type="evidence" value="ECO:0007669"/>
    <property type="project" value="UniProtKB-SubCell"/>
</dbReference>
<dbReference type="GO" id="GO:0048476">
    <property type="term" value="C:Holliday junction resolvase complex"/>
    <property type="evidence" value="ECO:0007669"/>
    <property type="project" value="UniProtKB-UniRule"/>
</dbReference>
<dbReference type="GO" id="GO:0005524">
    <property type="term" value="F:ATP binding"/>
    <property type="evidence" value="ECO:0007669"/>
    <property type="project" value="UniProtKB-UniRule"/>
</dbReference>
<dbReference type="GO" id="GO:0016887">
    <property type="term" value="F:ATP hydrolysis activity"/>
    <property type="evidence" value="ECO:0007669"/>
    <property type="project" value="InterPro"/>
</dbReference>
<dbReference type="GO" id="GO:0000400">
    <property type="term" value="F:four-way junction DNA binding"/>
    <property type="evidence" value="ECO:0007669"/>
    <property type="project" value="UniProtKB-UniRule"/>
</dbReference>
<dbReference type="GO" id="GO:0009378">
    <property type="term" value="F:four-way junction helicase activity"/>
    <property type="evidence" value="ECO:0007669"/>
    <property type="project" value="InterPro"/>
</dbReference>
<dbReference type="GO" id="GO:0006310">
    <property type="term" value="P:DNA recombination"/>
    <property type="evidence" value="ECO:0007669"/>
    <property type="project" value="UniProtKB-UniRule"/>
</dbReference>
<dbReference type="GO" id="GO:0006281">
    <property type="term" value="P:DNA repair"/>
    <property type="evidence" value="ECO:0007669"/>
    <property type="project" value="UniProtKB-UniRule"/>
</dbReference>
<dbReference type="CDD" id="cd00009">
    <property type="entry name" value="AAA"/>
    <property type="match status" value="1"/>
</dbReference>
<dbReference type="FunFam" id="3.40.50.300:FF:000073">
    <property type="entry name" value="Holliday junction ATP-dependent DNA helicase RuvB"/>
    <property type="match status" value="1"/>
</dbReference>
<dbReference type="Gene3D" id="1.10.8.60">
    <property type="match status" value="1"/>
</dbReference>
<dbReference type="Gene3D" id="3.40.50.300">
    <property type="entry name" value="P-loop containing nucleotide triphosphate hydrolases"/>
    <property type="match status" value="1"/>
</dbReference>
<dbReference type="Gene3D" id="1.10.10.10">
    <property type="entry name" value="Winged helix-like DNA-binding domain superfamily/Winged helix DNA-binding domain"/>
    <property type="match status" value="1"/>
</dbReference>
<dbReference type="HAMAP" id="MF_00016">
    <property type="entry name" value="DNA_HJ_migration_RuvB"/>
    <property type="match status" value="1"/>
</dbReference>
<dbReference type="InterPro" id="IPR003593">
    <property type="entry name" value="AAA+_ATPase"/>
</dbReference>
<dbReference type="InterPro" id="IPR041445">
    <property type="entry name" value="AAA_lid_4"/>
</dbReference>
<dbReference type="InterPro" id="IPR004605">
    <property type="entry name" value="DNA_helicase_Holl-junc_RuvB"/>
</dbReference>
<dbReference type="InterPro" id="IPR027417">
    <property type="entry name" value="P-loop_NTPase"/>
</dbReference>
<dbReference type="InterPro" id="IPR008824">
    <property type="entry name" value="RuvB-like_N"/>
</dbReference>
<dbReference type="InterPro" id="IPR008823">
    <property type="entry name" value="RuvB_C"/>
</dbReference>
<dbReference type="InterPro" id="IPR036388">
    <property type="entry name" value="WH-like_DNA-bd_sf"/>
</dbReference>
<dbReference type="InterPro" id="IPR036390">
    <property type="entry name" value="WH_DNA-bd_sf"/>
</dbReference>
<dbReference type="NCBIfam" id="NF000868">
    <property type="entry name" value="PRK00080.1"/>
    <property type="match status" value="1"/>
</dbReference>
<dbReference type="NCBIfam" id="TIGR00635">
    <property type="entry name" value="ruvB"/>
    <property type="match status" value="1"/>
</dbReference>
<dbReference type="PANTHER" id="PTHR42848">
    <property type="match status" value="1"/>
</dbReference>
<dbReference type="PANTHER" id="PTHR42848:SF1">
    <property type="entry name" value="HOLLIDAY JUNCTION BRANCH MIGRATION COMPLEX SUBUNIT RUVB"/>
    <property type="match status" value="1"/>
</dbReference>
<dbReference type="Pfam" id="PF17864">
    <property type="entry name" value="AAA_lid_4"/>
    <property type="match status" value="1"/>
</dbReference>
<dbReference type="Pfam" id="PF05491">
    <property type="entry name" value="RuvB_C"/>
    <property type="match status" value="1"/>
</dbReference>
<dbReference type="Pfam" id="PF05496">
    <property type="entry name" value="RuvB_N"/>
    <property type="match status" value="1"/>
</dbReference>
<dbReference type="SMART" id="SM00382">
    <property type="entry name" value="AAA"/>
    <property type="match status" value="1"/>
</dbReference>
<dbReference type="SUPFAM" id="SSF52540">
    <property type="entry name" value="P-loop containing nucleoside triphosphate hydrolases"/>
    <property type="match status" value="1"/>
</dbReference>
<dbReference type="SUPFAM" id="SSF46785">
    <property type="entry name" value="Winged helix' DNA-binding domain"/>
    <property type="match status" value="1"/>
</dbReference>
<protein>
    <recommendedName>
        <fullName evidence="1">Holliday junction branch migration complex subunit RuvB</fullName>
        <ecNumber evidence="1">3.6.4.-</ecNumber>
    </recommendedName>
</protein>
<name>RUVB_CITBB</name>